<name>DNB2_ADE07</name>
<evidence type="ECO:0000255" key="1">
    <source>
        <dbReference type="HAMAP-Rule" id="MF_04054"/>
    </source>
</evidence>
<evidence type="ECO:0000256" key="2">
    <source>
        <dbReference type="SAM" id="MobiDB-lite"/>
    </source>
</evidence>
<gene>
    <name evidence="1" type="primary">DBP</name>
</gene>
<dbReference type="EMBL" id="K02530">
    <property type="protein sequence ID" value="AAA42508.1"/>
    <property type="molecule type" value="Genomic_DNA"/>
</dbReference>
<dbReference type="PIR" id="A03834">
    <property type="entry name" value="ERADA7"/>
</dbReference>
<dbReference type="SMR" id="P04497"/>
<dbReference type="GO" id="GO:0042025">
    <property type="term" value="C:host cell nucleus"/>
    <property type="evidence" value="ECO:0000250"/>
    <property type="project" value="UniProtKB"/>
</dbReference>
<dbReference type="GO" id="GO:0019028">
    <property type="term" value="C:viral capsid"/>
    <property type="evidence" value="ECO:0000250"/>
    <property type="project" value="UniProtKB"/>
</dbReference>
<dbReference type="GO" id="GO:0003677">
    <property type="term" value="F:DNA binding"/>
    <property type="evidence" value="ECO:0000250"/>
    <property type="project" value="UniProtKB"/>
</dbReference>
<dbReference type="GO" id="GO:0008270">
    <property type="term" value="F:zinc ion binding"/>
    <property type="evidence" value="ECO:0007669"/>
    <property type="project" value="UniProtKB-UniRule"/>
</dbReference>
<dbReference type="GO" id="GO:0006260">
    <property type="term" value="P:DNA replication"/>
    <property type="evidence" value="ECO:0007669"/>
    <property type="project" value="UniProtKB-KW"/>
</dbReference>
<dbReference type="GO" id="GO:0006351">
    <property type="term" value="P:DNA-templated transcription"/>
    <property type="evidence" value="ECO:0007669"/>
    <property type="project" value="UniProtKB-UniRule"/>
</dbReference>
<dbReference type="GO" id="GO:0045740">
    <property type="term" value="P:positive regulation of DNA replication"/>
    <property type="evidence" value="ECO:0007669"/>
    <property type="project" value="UniProtKB-UniRule"/>
</dbReference>
<dbReference type="GO" id="GO:0039693">
    <property type="term" value="P:viral DNA genome replication"/>
    <property type="evidence" value="ECO:0000250"/>
    <property type="project" value="UniProtKB"/>
</dbReference>
<dbReference type="GO" id="GO:0039687">
    <property type="term" value="P:viral DNA strand displacement replication"/>
    <property type="evidence" value="ECO:0000250"/>
    <property type="project" value="UniProtKB"/>
</dbReference>
<dbReference type="FunFam" id="1.10.269.10:FF:000001">
    <property type="entry name" value="DNA-binding protein"/>
    <property type="match status" value="1"/>
</dbReference>
<dbReference type="FunFam" id="3.90.148.10:FF:000001">
    <property type="entry name" value="DNA-binding protein"/>
    <property type="match status" value="1"/>
</dbReference>
<dbReference type="Gene3D" id="3.90.148.10">
    <property type="entry name" value="Adenovirus DNA-binding, C-terminal domain superfamily/Adenovirus DNA-binding, zinc binding domain"/>
    <property type="match status" value="2"/>
</dbReference>
<dbReference type="Gene3D" id="1.10.269.10">
    <property type="entry name" value="Adenovirus DNA-binding, N-terminal domain"/>
    <property type="match status" value="1"/>
</dbReference>
<dbReference type="HAMAP" id="MF_04054">
    <property type="entry name" value="ADV_DNB2"/>
    <property type="match status" value="1"/>
</dbReference>
<dbReference type="InterPro" id="IPR036367">
    <property type="entry name" value="Ad_DBP_C_sf"/>
</dbReference>
<dbReference type="InterPro" id="IPR036368">
    <property type="entry name" value="ADBP_zn-bd_sf"/>
</dbReference>
<dbReference type="InterPro" id="IPR003176">
    <property type="entry name" value="Adenovirus_DNA-bd_a"/>
</dbReference>
<dbReference type="InterPro" id="IPR036362">
    <property type="entry name" value="Adenovirus_DNA-bd_N_sf"/>
</dbReference>
<dbReference type="InterPro" id="IPR005376">
    <property type="entry name" value="Adenovirus_DNA-bd_zn-bd"/>
</dbReference>
<dbReference type="InterPro" id="IPR037540">
    <property type="entry name" value="ADV_DNB2"/>
</dbReference>
<dbReference type="Pfam" id="PF02236">
    <property type="entry name" value="Viral_DNA_bi"/>
    <property type="match status" value="1"/>
</dbReference>
<dbReference type="Pfam" id="PF03728">
    <property type="entry name" value="Viral_DNA_Zn_bi"/>
    <property type="match status" value="2"/>
</dbReference>
<dbReference type="SUPFAM" id="SSF47724">
    <property type="entry name" value="Domain of early E2A DNA-binding protein, ADDBP"/>
    <property type="match status" value="1"/>
</dbReference>
<dbReference type="SUPFAM" id="SSF57917">
    <property type="entry name" value="Zn-binding domains of ADDBP"/>
    <property type="match status" value="2"/>
</dbReference>
<organism>
    <name type="scientific">Human adenovirus B serotype 7</name>
    <name type="common">HAdV-7</name>
    <name type="synonym">Human adenovirus 7</name>
    <dbReference type="NCBI Taxonomy" id="10519"/>
    <lineage>
        <taxon>Viruses</taxon>
        <taxon>Varidnaviria</taxon>
        <taxon>Bamfordvirae</taxon>
        <taxon>Preplasmiviricota</taxon>
        <taxon>Tectiliviricetes</taxon>
        <taxon>Rowavirales</taxon>
        <taxon>Adenoviridae</taxon>
        <taxon>Mastadenovirus</taxon>
        <taxon>Human mastadenovirus B</taxon>
    </lineage>
</organism>
<reference key="1">
    <citation type="journal article" date="1984" name="J. Biol. Chem.">
        <title>Sequence of the DNA-binding protein gene of a human subgroup B adenovirus (type 7). Comparisons with subgroup C (type 5) and subgroup A (type 12).</title>
        <authorList>
            <person name="Quinn C.O."/>
            <person name="Kitchingman G.R."/>
        </authorList>
    </citation>
    <scope>NUCLEOTIDE SEQUENCE [GENOMIC DNA]</scope>
</reference>
<feature type="chain" id="PRO_0000221680" description="DNA-binding protein">
    <location>
        <begin position="1"/>
        <end position="517"/>
    </location>
</feature>
<feature type="region of interest" description="Disordered" evidence="2">
    <location>
        <begin position="1"/>
        <end position="110"/>
    </location>
</feature>
<feature type="region of interest" description="Flexible loop" evidence="1">
    <location>
        <begin position="282"/>
        <end position="316"/>
    </location>
</feature>
<feature type="region of interest" description="C-terminal arm, DBP binding" evidence="1">
    <location>
        <begin position="501"/>
        <end position="517"/>
    </location>
</feature>
<feature type="compositionally biased region" description="Polar residues" evidence="2">
    <location>
        <begin position="1"/>
        <end position="10"/>
    </location>
</feature>
<feature type="compositionally biased region" description="Low complexity" evidence="2">
    <location>
        <begin position="64"/>
        <end position="80"/>
    </location>
</feature>
<feature type="compositionally biased region" description="Basic residues" evidence="2">
    <location>
        <begin position="87"/>
        <end position="96"/>
    </location>
</feature>
<feature type="binding site" evidence="1">
    <location>
        <position position="269"/>
    </location>
    <ligand>
        <name>Zn(2+)</name>
        <dbReference type="ChEBI" id="CHEBI:29105"/>
        <label>1</label>
    </ligand>
</feature>
<feature type="binding site" evidence="1">
    <location>
        <position position="271"/>
    </location>
    <ligand>
        <name>Zn(2+)</name>
        <dbReference type="ChEBI" id="CHEBI:29105"/>
        <label>1</label>
    </ligand>
</feature>
<feature type="binding site" evidence="1">
    <location>
        <position position="324"/>
    </location>
    <ligand>
        <name>Zn(2+)</name>
        <dbReference type="ChEBI" id="CHEBI:29105"/>
        <label>1</label>
    </ligand>
</feature>
<feature type="binding site" evidence="1">
    <location>
        <position position="340"/>
    </location>
    <ligand>
        <name>Zn(2+)</name>
        <dbReference type="ChEBI" id="CHEBI:29105"/>
        <label>1</label>
    </ligand>
</feature>
<feature type="binding site" evidence="1">
    <location>
        <position position="382"/>
    </location>
    <ligand>
        <name>Zn(2+)</name>
        <dbReference type="ChEBI" id="CHEBI:29105"/>
        <label>2</label>
    </ligand>
</feature>
<feature type="binding site" evidence="1">
    <location>
        <position position="384"/>
    </location>
    <ligand>
        <name>Zn(2+)</name>
        <dbReference type="ChEBI" id="CHEBI:29105"/>
        <label>2</label>
    </ligand>
</feature>
<feature type="binding site" evidence="1">
    <location>
        <position position="436"/>
    </location>
    <ligand>
        <name>Zn(2+)</name>
        <dbReference type="ChEBI" id="CHEBI:29105"/>
        <label>2</label>
    </ligand>
</feature>
<feature type="binding site" evidence="1">
    <location>
        <position position="453"/>
    </location>
    <ligand>
        <name>Zn(2+)</name>
        <dbReference type="ChEBI" id="CHEBI:29105"/>
        <label>2</label>
    </ligand>
</feature>
<feature type="modified residue" description="Phosphotyrosine; by host" evidence="1">
    <location>
        <position position="180"/>
    </location>
</feature>
<proteinExistence type="inferred from homology"/>
<accession>P04497</accession>
<sequence length="517" mass="58306">MASRGGNQSSDRQREHTPERGMGSASHPPPRPDRSPSQSPPPLPPKRNTYRRVGSNSSIESQVVLVSETSRSSLSPERSNSPPPIPPKKKPRKTKHVPLQDISQDSEEEREQVQLVRVGFSYPPVRIIEKDGKRSVEKIDNNDPISKGATSIAVRNPLSLPLVSAWEKGMEVMAVLMERYRLDNDLRTSFKLMPEQHEQYKRICHQYVNEEHRGIPLTFSSMKTLTAMMGRFMQGLVHSYSEIAHNNWECTGCALWAHGCTDYEGKVKCLHGTIMIQKDHIIEMDVASENGQRAMKENPDRAKITQNRWGRNVVQLANNDARCCVNDANCATNQFSSKSCGMFYTEGIKAQEAFKQYEAFMKAVYPGITPDQARMMLIPIHCDCNHKPGCAPVMGRQTCKMTPFGMANAEDLDVATISDPTVLASVRHPALMVFQCCNPVYRNSRVQNAGPNCDFKISAPDLLGALQLTRKLWQDTFPEIPVPKLVIPEFKWQNRLQFRNVSLPAGHYDSRQNPFDF</sequence>
<keyword id="KW-0235">DNA replication</keyword>
<keyword id="KW-0238">DNA-binding</keyword>
<keyword id="KW-0244">Early protein</keyword>
<keyword id="KW-1048">Host nucleus</keyword>
<keyword id="KW-0945">Host-virus interaction</keyword>
<keyword id="KW-0479">Metal-binding</keyword>
<keyword id="KW-0597">Phosphoprotein</keyword>
<keyword id="KW-1194">Viral DNA replication</keyword>
<keyword id="KW-0862">Zinc</keyword>
<comment type="function">
    <text evidence="1">Plays a role in the elongation phase of viral strand displacement replication by unwinding the template in an ATP-independent fashion, employing its capacity to form multimers. Also enhances the rate of initiation. Released from template upon second strand synthesis. Assembles in complex with viral pTP, viral pol, host NFIA and host POU2F1/OCT1 on viral origin of replication. Covers the whole ssDNA genome during synthesis. The complementary strand synthesis induces its relese from DNA template. May inhibit cellular transcription mediated by the interaction between host SRCAP and CBP.</text>
</comment>
<comment type="subunit">
    <text evidence="1">Homomultimerizes on viral ssDNA bound to pTP. Forms a initiation complex with viral polymerase, pTP and hosts NFIA and POU2F1/OCT1. Interacts with host SRCAP.</text>
</comment>
<comment type="subcellular location">
    <subcellularLocation>
        <location evidence="1">Host nucleus</location>
    </subcellularLocation>
    <text evidence="1">Accumulates in infected cells.</text>
</comment>
<comment type="domain">
    <text evidence="1">The C-terminal arm bridges DBP molecules together, thereby creating a chain.</text>
</comment>
<comment type="similarity">
    <text evidence="1">Belongs to the adenoviridae E2A DNA-binding protein family.</text>
</comment>
<organismHost>
    <name type="scientific">Homo sapiens</name>
    <name type="common">Human</name>
    <dbReference type="NCBI Taxonomy" id="9606"/>
</organismHost>
<protein>
    <recommendedName>
        <fullName evidence="1">DNA-binding protein</fullName>
        <shortName evidence="1">DBP</shortName>
    </recommendedName>
    <alternativeName>
        <fullName evidence="1">Early 2A protein</fullName>
    </alternativeName>
    <alternativeName>
        <fullName evidence="1">Early E2A DNA-binding protein</fullName>
    </alternativeName>
</protein>